<sequence>MPKGDGKLVAQNKKARHDYAIEETFEAGIVLQGTEIKSVRNARVNLKDSYARIDKGEIFLHNMHISPYEQGNRYNHDPLRTRKLLLHKKQISRLIGETKESGYSIVPLKMYIKDGYAKVLIGVARGKKKYDKRQDLKQKEAKRDIERAFKERQQ</sequence>
<gene>
    <name evidence="1" type="primary">smpB</name>
    <name type="ordered locus">lin2542</name>
</gene>
<accession>P66861</accession>
<accession>Q928J0</accession>
<name>SSRP_LISIN</name>
<evidence type="ECO:0000255" key="1">
    <source>
        <dbReference type="HAMAP-Rule" id="MF_00023"/>
    </source>
</evidence>
<evidence type="ECO:0000256" key="2">
    <source>
        <dbReference type="SAM" id="MobiDB-lite"/>
    </source>
</evidence>
<feature type="chain" id="PRO_0000102973" description="SsrA-binding protein">
    <location>
        <begin position="1"/>
        <end position="154"/>
    </location>
</feature>
<feature type="region of interest" description="Disordered" evidence="2">
    <location>
        <begin position="131"/>
        <end position="154"/>
    </location>
</feature>
<feature type="compositionally biased region" description="Basic and acidic residues" evidence="2">
    <location>
        <begin position="132"/>
        <end position="154"/>
    </location>
</feature>
<keyword id="KW-0963">Cytoplasm</keyword>
<keyword id="KW-0694">RNA-binding</keyword>
<comment type="function">
    <text evidence="1">Required for rescue of stalled ribosomes mediated by trans-translation. Binds to transfer-messenger RNA (tmRNA), required for stable association of tmRNA with ribosomes. tmRNA and SmpB together mimic tRNA shape, replacing the anticodon stem-loop with SmpB. tmRNA is encoded by the ssrA gene; the 2 termini fold to resemble tRNA(Ala) and it encodes a 'tag peptide', a short internal open reading frame. During trans-translation Ala-aminoacylated tmRNA acts like a tRNA, entering the A-site of stalled ribosomes, displacing the stalled mRNA. The ribosome then switches to translate the ORF on the tmRNA; the nascent peptide is terminated with the 'tag peptide' encoded by the tmRNA and targeted for degradation. The ribosome is freed to recommence translation, which seems to be the essential function of trans-translation.</text>
</comment>
<comment type="subcellular location">
    <subcellularLocation>
        <location evidence="1">Cytoplasm</location>
    </subcellularLocation>
    <text evidence="1">The tmRNA-SmpB complex associates with stalled 70S ribosomes.</text>
</comment>
<comment type="similarity">
    <text evidence="1">Belongs to the SmpB family.</text>
</comment>
<reference key="1">
    <citation type="journal article" date="2001" name="Science">
        <title>Comparative genomics of Listeria species.</title>
        <authorList>
            <person name="Glaser P."/>
            <person name="Frangeul L."/>
            <person name="Buchrieser C."/>
            <person name="Rusniok C."/>
            <person name="Amend A."/>
            <person name="Baquero F."/>
            <person name="Berche P."/>
            <person name="Bloecker H."/>
            <person name="Brandt P."/>
            <person name="Chakraborty T."/>
            <person name="Charbit A."/>
            <person name="Chetouani F."/>
            <person name="Couve E."/>
            <person name="de Daruvar A."/>
            <person name="Dehoux P."/>
            <person name="Domann E."/>
            <person name="Dominguez-Bernal G."/>
            <person name="Duchaud E."/>
            <person name="Durant L."/>
            <person name="Dussurget O."/>
            <person name="Entian K.-D."/>
            <person name="Fsihi H."/>
            <person name="Garcia-del Portillo F."/>
            <person name="Garrido P."/>
            <person name="Gautier L."/>
            <person name="Goebel W."/>
            <person name="Gomez-Lopez N."/>
            <person name="Hain T."/>
            <person name="Hauf J."/>
            <person name="Jackson D."/>
            <person name="Jones L.-M."/>
            <person name="Kaerst U."/>
            <person name="Kreft J."/>
            <person name="Kuhn M."/>
            <person name="Kunst F."/>
            <person name="Kurapkat G."/>
            <person name="Madueno E."/>
            <person name="Maitournam A."/>
            <person name="Mata Vicente J."/>
            <person name="Ng E."/>
            <person name="Nedjari H."/>
            <person name="Nordsiek G."/>
            <person name="Novella S."/>
            <person name="de Pablos B."/>
            <person name="Perez-Diaz J.-C."/>
            <person name="Purcell R."/>
            <person name="Remmel B."/>
            <person name="Rose M."/>
            <person name="Schlueter T."/>
            <person name="Simoes N."/>
            <person name="Tierrez A."/>
            <person name="Vazquez-Boland J.-A."/>
            <person name="Voss H."/>
            <person name="Wehland J."/>
            <person name="Cossart P."/>
        </authorList>
    </citation>
    <scope>NUCLEOTIDE SEQUENCE [LARGE SCALE GENOMIC DNA]</scope>
    <source>
        <strain>ATCC BAA-680 / CLIP 11262</strain>
    </source>
</reference>
<organism>
    <name type="scientific">Listeria innocua serovar 6a (strain ATCC BAA-680 / CLIP 11262)</name>
    <dbReference type="NCBI Taxonomy" id="272626"/>
    <lineage>
        <taxon>Bacteria</taxon>
        <taxon>Bacillati</taxon>
        <taxon>Bacillota</taxon>
        <taxon>Bacilli</taxon>
        <taxon>Bacillales</taxon>
        <taxon>Listeriaceae</taxon>
        <taxon>Listeria</taxon>
    </lineage>
</organism>
<protein>
    <recommendedName>
        <fullName evidence="1">SsrA-binding protein</fullName>
    </recommendedName>
    <alternativeName>
        <fullName evidence="1">Small protein B</fullName>
    </alternativeName>
</protein>
<proteinExistence type="inferred from homology"/>
<dbReference type="EMBL" id="AL596172">
    <property type="protein sequence ID" value="CAC97769.1"/>
    <property type="molecule type" value="Genomic_DNA"/>
</dbReference>
<dbReference type="PIR" id="AI1749">
    <property type="entry name" value="AI1749"/>
</dbReference>
<dbReference type="RefSeq" id="WP_003723350.1">
    <property type="nucleotide sequence ID" value="NC_003212.1"/>
</dbReference>
<dbReference type="SMR" id="P66861"/>
<dbReference type="STRING" id="272626.gene:17566922"/>
<dbReference type="GeneID" id="93240313"/>
<dbReference type="KEGG" id="lin:lin2542"/>
<dbReference type="eggNOG" id="COG0691">
    <property type="taxonomic scope" value="Bacteria"/>
</dbReference>
<dbReference type="HOGENOM" id="CLU_108953_0_0_9"/>
<dbReference type="OrthoDB" id="9805462at2"/>
<dbReference type="Proteomes" id="UP000002513">
    <property type="component" value="Chromosome"/>
</dbReference>
<dbReference type="GO" id="GO:0005829">
    <property type="term" value="C:cytosol"/>
    <property type="evidence" value="ECO:0007669"/>
    <property type="project" value="TreeGrafter"/>
</dbReference>
<dbReference type="GO" id="GO:0003723">
    <property type="term" value="F:RNA binding"/>
    <property type="evidence" value="ECO:0007669"/>
    <property type="project" value="UniProtKB-UniRule"/>
</dbReference>
<dbReference type="GO" id="GO:0070929">
    <property type="term" value="P:trans-translation"/>
    <property type="evidence" value="ECO:0007669"/>
    <property type="project" value="UniProtKB-UniRule"/>
</dbReference>
<dbReference type="CDD" id="cd09294">
    <property type="entry name" value="SmpB"/>
    <property type="match status" value="1"/>
</dbReference>
<dbReference type="Gene3D" id="2.40.280.10">
    <property type="match status" value="1"/>
</dbReference>
<dbReference type="HAMAP" id="MF_00023">
    <property type="entry name" value="SmpB"/>
    <property type="match status" value="1"/>
</dbReference>
<dbReference type="InterPro" id="IPR023620">
    <property type="entry name" value="SmpB"/>
</dbReference>
<dbReference type="InterPro" id="IPR000037">
    <property type="entry name" value="SsrA-bd_prot"/>
</dbReference>
<dbReference type="InterPro" id="IPR020081">
    <property type="entry name" value="SsrA-bd_prot_CS"/>
</dbReference>
<dbReference type="NCBIfam" id="NF003843">
    <property type="entry name" value="PRK05422.1"/>
    <property type="match status" value="1"/>
</dbReference>
<dbReference type="NCBIfam" id="TIGR00086">
    <property type="entry name" value="smpB"/>
    <property type="match status" value="1"/>
</dbReference>
<dbReference type="PANTHER" id="PTHR30308:SF2">
    <property type="entry name" value="SSRA-BINDING PROTEIN"/>
    <property type="match status" value="1"/>
</dbReference>
<dbReference type="PANTHER" id="PTHR30308">
    <property type="entry name" value="TMRNA-BINDING COMPONENT OF TRANS-TRANSLATION TAGGING COMPLEX"/>
    <property type="match status" value="1"/>
</dbReference>
<dbReference type="Pfam" id="PF01668">
    <property type="entry name" value="SmpB"/>
    <property type="match status" value="1"/>
</dbReference>
<dbReference type="SUPFAM" id="SSF74982">
    <property type="entry name" value="Small protein B (SmpB)"/>
    <property type="match status" value="1"/>
</dbReference>
<dbReference type="PROSITE" id="PS01317">
    <property type="entry name" value="SSRP"/>
    <property type="match status" value="1"/>
</dbReference>